<gene>
    <name evidence="2" type="primary">mdtL</name>
    <name type="ordered locus">SBO_3665</name>
</gene>
<reference key="1">
    <citation type="journal article" date="2005" name="Nucleic Acids Res.">
        <title>Genome dynamics and diversity of Shigella species, the etiologic agents of bacillary dysentery.</title>
        <authorList>
            <person name="Yang F."/>
            <person name="Yang J."/>
            <person name="Zhang X."/>
            <person name="Chen L."/>
            <person name="Jiang Y."/>
            <person name="Yan Y."/>
            <person name="Tang X."/>
            <person name="Wang J."/>
            <person name="Xiong Z."/>
            <person name="Dong J."/>
            <person name="Xue Y."/>
            <person name="Zhu Y."/>
            <person name="Xu X."/>
            <person name="Sun L."/>
            <person name="Chen S."/>
            <person name="Nie H."/>
            <person name="Peng J."/>
            <person name="Xu J."/>
            <person name="Wang Y."/>
            <person name="Yuan Z."/>
            <person name="Wen Y."/>
            <person name="Yao Z."/>
            <person name="Shen Y."/>
            <person name="Qiang B."/>
            <person name="Hou Y."/>
            <person name="Yu J."/>
            <person name="Jin Q."/>
        </authorList>
    </citation>
    <scope>NUCLEOTIDE SEQUENCE [LARGE SCALE GENOMIC DNA]</scope>
    <source>
        <strain>Sb227</strain>
    </source>
</reference>
<protein>
    <recommendedName>
        <fullName evidence="2">Multidrug resistance protein MdtL</fullName>
    </recommendedName>
</protein>
<name>MDTL_SHIBS</name>
<feature type="chain" id="PRO_0000282002" description="Multidrug resistance protein MdtL">
    <location>
        <begin position="1"/>
        <end position="391"/>
    </location>
</feature>
<feature type="topological domain" description="Cytoplasmic" evidence="1">
    <location>
        <begin position="1"/>
        <end position="3"/>
    </location>
</feature>
<feature type="transmembrane region" description="Helical" evidence="2">
    <location>
        <begin position="4"/>
        <end position="24"/>
    </location>
</feature>
<feature type="topological domain" description="Periplasmic" evidence="1">
    <location>
        <begin position="25"/>
        <end position="41"/>
    </location>
</feature>
<feature type="transmembrane region" description="Helical" evidence="2">
    <location>
        <begin position="42"/>
        <end position="62"/>
    </location>
</feature>
<feature type="topological domain" description="Cytoplasmic" evidence="1">
    <location>
        <begin position="63"/>
        <end position="68"/>
    </location>
</feature>
<feature type="transmembrane region" description="Helical" evidence="2">
    <location>
        <begin position="69"/>
        <end position="89"/>
    </location>
</feature>
<feature type="topological domain" description="Periplasmic" evidence="1">
    <location>
        <begin position="90"/>
        <end position="92"/>
    </location>
</feature>
<feature type="transmembrane region" description="Helical" evidence="2">
    <location>
        <begin position="93"/>
        <end position="113"/>
    </location>
</feature>
<feature type="topological domain" description="Cytoplasmic" evidence="1">
    <location>
        <begin position="114"/>
        <end position="130"/>
    </location>
</feature>
<feature type="transmembrane region" description="Helical" evidence="2">
    <location>
        <begin position="131"/>
        <end position="151"/>
    </location>
</feature>
<feature type="topological domain" description="Periplasmic" evidence="1">
    <location>
        <begin position="152"/>
        <end position="157"/>
    </location>
</feature>
<feature type="transmembrane region" description="Helical" evidence="2">
    <location>
        <begin position="158"/>
        <end position="178"/>
    </location>
</feature>
<feature type="topological domain" description="Cytoplasmic" evidence="1">
    <location>
        <begin position="179"/>
        <end position="202"/>
    </location>
</feature>
<feature type="transmembrane region" description="Helical" evidence="2">
    <location>
        <begin position="203"/>
        <end position="222"/>
    </location>
</feature>
<feature type="topological domain" description="Periplasmic" evidence="1">
    <location>
        <begin position="223"/>
        <end position="244"/>
    </location>
</feature>
<feature type="transmembrane region" description="Helical" evidence="2">
    <location>
        <begin position="245"/>
        <end position="265"/>
    </location>
</feature>
<feature type="topological domain" description="Cytoplasmic" evidence="1">
    <location>
        <begin position="266"/>
        <end position="268"/>
    </location>
</feature>
<feature type="transmembrane region" description="Helical" evidence="2">
    <location>
        <begin position="269"/>
        <end position="289"/>
    </location>
</feature>
<feature type="topological domain" description="Periplasmic" evidence="1">
    <location>
        <begin position="290"/>
        <end position="292"/>
    </location>
</feature>
<feature type="transmembrane region" description="Helical" evidence="2">
    <location>
        <begin position="293"/>
        <end position="313"/>
    </location>
</feature>
<feature type="topological domain" description="Cytoplasmic" evidence="1">
    <location>
        <begin position="314"/>
        <end position="330"/>
    </location>
</feature>
<feature type="transmembrane region" description="Helical" evidence="2">
    <location>
        <begin position="331"/>
        <end position="351"/>
    </location>
</feature>
<feature type="topological domain" description="Periplasmic" evidence="1">
    <location>
        <begin position="352"/>
        <end position="355"/>
    </location>
</feature>
<feature type="transmembrane region" description="Helical" evidence="2">
    <location>
        <begin position="356"/>
        <end position="376"/>
    </location>
</feature>
<feature type="topological domain" description="Cytoplasmic" evidence="1">
    <location>
        <begin position="377"/>
        <end position="391"/>
    </location>
</feature>
<dbReference type="EMBL" id="CP000036">
    <property type="protein sequence ID" value="ABB68144.1"/>
    <property type="molecule type" value="Genomic_DNA"/>
</dbReference>
<dbReference type="RefSeq" id="WP_000085987.1">
    <property type="nucleotide sequence ID" value="NC_007613.1"/>
</dbReference>
<dbReference type="SMR" id="Q31UW4"/>
<dbReference type="GeneID" id="93778451"/>
<dbReference type="KEGG" id="sbo:SBO_3665"/>
<dbReference type="HOGENOM" id="CLU_001265_47_1_6"/>
<dbReference type="Proteomes" id="UP000007067">
    <property type="component" value="Chromosome"/>
</dbReference>
<dbReference type="GO" id="GO:0005886">
    <property type="term" value="C:plasma membrane"/>
    <property type="evidence" value="ECO:0007669"/>
    <property type="project" value="UniProtKB-SubCell"/>
</dbReference>
<dbReference type="GO" id="GO:0022857">
    <property type="term" value="F:transmembrane transporter activity"/>
    <property type="evidence" value="ECO:0007669"/>
    <property type="project" value="UniProtKB-UniRule"/>
</dbReference>
<dbReference type="CDD" id="cd17320">
    <property type="entry name" value="MFS_MdfA_MDR_like"/>
    <property type="match status" value="1"/>
</dbReference>
<dbReference type="FunFam" id="1.20.1720.10:FF:000003">
    <property type="entry name" value="Multidrug resistance protein MdtL"/>
    <property type="match status" value="1"/>
</dbReference>
<dbReference type="Gene3D" id="1.20.1720.10">
    <property type="entry name" value="Multidrug resistance protein D"/>
    <property type="match status" value="1"/>
</dbReference>
<dbReference type="HAMAP" id="MF_01530">
    <property type="entry name" value="MFS_MdtL"/>
    <property type="match status" value="1"/>
</dbReference>
<dbReference type="InterPro" id="IPR011701">
    <property type="entry name" value="MFS"/>
</dbReference>
<dbReference type="InterPro" id="IPR020846">
    <property type="entry name" value="MFS_dom"/>
</dbReference>
<dbReference type="InterPro" id="IPR050189">
    <property type="entry name" value="MFS_Efflux_Transporters"/>
</dbReference>
<dbReference type="InterPro" id="IPR036259">
    <property type="entry name" value="MFS_trans_sf"/>
</dbReference>
<dbReference type="InterPro" id="IPR023697">
    <property type="entry name" value="Multidrug-R_MdtL"/>
</dbReference>
<dbReference type="NCBIfam" id="NF007782">
    <property type="entry name" value="PRK10473.1"/>
    <property type="match status" value="1"/>
</dbReference>
<dbReference type="PANTHER" id="PTHR43124:SF3">
    <property type="entry name" value="CHLORAMPHENICOL EFFLUX PUMP RV0191"/>
    <property type="match status" value="1"/>
</dbReference>
<dbReference type="PANTHER" id="PTHR43124">
    <property type="entry name" value="PURINE EFFLUX PUMP PBUE"/>
    <property type="match status" value="1"/>
</dbReference>
<dbReference type="Pfam" id="PF07690">
    <property type="entry name" value="MFS_1"/>
    <property type="match status" value="1"/>
</dbReference>
<dbReference type="SUPFAM" id="SSF103473">
    <property type="entry name" value="MFS general substrate transporter"/>
    <property type="match status" value="1"/>
</dbReference>
<dbReference type="PROSITE" id="PS50850">
    <property type="entry name" value="MFS"/>
    <property type="match status" value="1"/>
</dbReference>
<organism>
    <name type="scientific">Shigella boydii serotype 4 (strain Sb227)</name>
    <dbReference type="NCBI Taxonomy" id="300268"/>
    <lineage>
        <taxon>Bacteria</taxon>
        <taxon>Pseudomonadati</taxon>
        <taxon>Pseudomonadota</taxon>
        <taxon>Gammaproteobacteria</taxon>
        <taxon>Enterobacterales</taxon>
        <taxon>Enterobacteriaceae</taxon>
        <taxon>Shigella</taxon>
    </lineage>
</organism>
<proteinExistence type="inferred from homology"/>
<sequence length="391" mass="41506">MSRFLICSFALVLLYPAGIDMYLVGLPRIAADLNASEAQLHIAFSVYLAGMAAAMLFAGKVADRSGRKPVAIPGAALFIIASVFCSLAETSTLFLAGRFLQGLGAGCCYVVAFAILRDTLDDRRRAKVLSLLNGITCIIPVLAPVLGHLIMLKFPWQSLFWAMAMMGIAVLMLSLFILKETRPASPAASDKPRENSESLLNRFFLSRVVITTLSVSVILTFVNTSPVLLMEIMGFERGEYATIMALTAGVSMTVSFSTPFALGIFKPRTLMITSQVLFLAAGITLAVSPSHAVSLFGITLICAGFSVGFGVAMSQALGPFSLRAGVASSTLGIAQVCGSSLWIWLAAVVGIGAWNMLIGILIACSIVSLLLIMFVAPGRPVAAHEEIHHHA</sequence>
<comment type="subcellular location">
    <subcellularLocation>
        <location evidence="2">Cell inner membrane</location>
        <topology evidence="2">Multi-pass membrane protein</topology>
    </subcellularLocation>
</comment>
<comment type="similarity">
    <text evidence="2">Belongs to the major facilitator superfamily. DHA1 family. MdtL (TC 2.A.1.2.22) subfamily.</text>
</comment>
<keyword id="KW-0997">Cell inner membrane</keyword>
<keyword id="KW-1003">Cell membrane</keyword>
<keyword id="KW-0472">Membrane</keyword>
<keyword id="KW-0812">Transmembrane</keyword>
<keyword id="KW-1133">Transmembrane helix</keyword>
<keyword id="KW-0813">Transport</keyword>
<accession>Q31UW4</accession>
<evidence type="ECO:0000255" key="1"/>
<evidence type="ECO:0000255" key="2">
    <source>
        <dbReference type="HAMAP-Rule" id="MF_01530"/>
    </source>
</evidence>